<comment type="function">
    <text evidence="1">Catalyzes the final step of fatty acid oxidation in which acetyl-CoA is released and the CoA ester of a fatty acid two carbons shorter is formed.</text>
</comment>
<comment type="catalytic activity">
    <reaction evidence="1">
        <text>an acyl-CoA + acetyl-CoA = a 3-oxoacyl-CoA + CoA</text>
        <dbReference type="Rhea" id="RHEA:21564"/>
        <dbReference type="ChEBI" id="CHEBI:57287"/>
        <dbReference type="ChEBI" id="CHEBI:57288"/>
        <dbReference type="ChEBI" id="CHEBI:58342"/>
        <dbReference type="ChEBI" id="CHEBI:90726"/>
        <dbReference type="EC" id="2.3.1.16"/>
    </reaction>
</comment>
<comment type="pathway">
    <text evidence="1">Lipid metabolism; fatty acid beta-oxidation.</text>
</comment>
<comment type="subunit">
    <text evidence="1">Heterotetramer of two alpha chains (FadJ) and two beta chains (FadI).</text>
</comment>
<comment type="subcellular location">
    <subcellularLocation>
        <location evidence="1">Cytoplasm</location>
    </subcellularLocation>
</comment>
<comment type="similarity">
    <text evidence="1">Belongs to the thiolase-like superfamily. Thiolase family.</text>
</comment>
<dbReference type="EC" id="2.3.1.16" evidence="1"/>
<dbReference type="EMBL" id="CP001048">
    <property type="protein sequence ID" value="ACC89694.1"/>
    <property type="molecule type" value="Genomic_DNA"/>
</dbReference>
<dbReference type="RefSeq" id="WP_002209704.1">
    <property type="nucleotide sequence ID" value="NZ_CP009780.1"/>
</dbReference>
<dbReference type="SMR" id="B2K8J6"/>
<dbReference type="GeneID" id="57975943"/>
<dbReference type="KEGG" id="ypb:YPTS_2734"/>
<dbReference type="PATRIC" id="fig|502801.10.peg.2157"/>
<dbReference type="UniPathway" id="UPA00659"/>
<dbReference type="GO" id="GO:0005829">
    <property type="term" value="C:cytosol"/>
    <property type="evidence" value="ECO:0007669"/>
    <property type="project" value="TreeGrafter"/>
</dbReference>
<dbReference type="GO" id="GO:0003988">
    <property type="term" value="F:acetyl-CoA C-acyltransferase activity"/>
    <property type="evidence" value="ECO:0007669"/>
    <property type="project" value="UniProtKB-UniRule"/>
</dbReference>
<dbReference type="GO" id="GO:0006635">
    <property type="term" value="P:fatty acid beta-oxidation"/>
    <property type="evidence" value="ECO:0007669"/>
    <property type="project" value="UniProtKB-UniRule"/>
</dbReference>
<dbReference type="CDD" id="cd00751">
    <property type="entry name" value="thiolase"/>
    <property type="match status" value="1"/>
</dbReference>
<dbReference type="FunFam" id="3.40.47.10:FF:000011">
    <property type="entry name" value="3-ketoacyl-CoA thiolase"/>
    <property type="match status" value="1"/>
</dbReference>
<dbReference type="Gene3D" id="3.40.47.10">
    <property type="match status" value="1"/>
</dbReference>
<dbReference type="HAMAP" id="MF_01618">
    <property type="entry name" value="FadI"/>
    <property type="match status" value="1"/>
</dbReference>
<dbReference type="InterPro" id="IPR012806">
    <property type="entry name" value="Ac-CoA_C-AcTrfase_FadI"/>
</dbReference>
<dbReference type="InterPro" id="IPR002155">
    <property type="entry name" value="Thiolase"/>
</dbReference>
<dbReference type="InterPro" id="IPR016039">
    <property type="entry name" value="Thiolase-like"/>
</dbReference>
<dbReference type="InterPro" id="IPR020615">
    <property type="entry name" value="Thiolase_acyl_enz_int_AS"/>
</dbReference>
<dbReference type="InterPro" id="IPR020610">
    <property type="entry name" value="Thiolase_AS"/>
</dbReference>
<dbReference type="InterPro" id="IPR020617">
    <property type="entry name" value="Thiolase_C"/>
</dbReference>
<dbReference type="InterPro" id="IPR020613">
    <property type="entry name" value="Thiolase_CS"/>
</dbReference>
<dbReference type="InterPro" id="IPR020616">
    <property type="entry name" value="Thiolase_N"/>
</dbReference>
<dbReference type="NCBIfam" id="TIGR01930">
    <property type="entry name" value="AcCoA-C-Actrans"/>
    <property type="match status" value="1"/>
</dbReference>
<dbReference type="NCBIfam" id="TIGR02446">
    <property type="entry name" value="FadI"/>
    <property type="match status" value="1"/>
</dbReference>
<dbReference type="NCBIfam" id="NF006516">
    <property type="entry name" value="PRK08963.1"/>
    <property type="match status" value="1"/>
</dbReference>
<dbReference type="PANTHER" id="PTHR18919:SF107">
    <property type="entry name" value="ACETYL-COA ACETYLTRANSFERASE, CYTOSOLIC"/>
    <property type="match status" value="1"/>
</dbReference>
<dbReference type="PANTHER" id="PTHR18919">
    <property type="entry name" value="ACETYL-COA C-ACYLTRANSFERASE"/>
    <property type="match status" value="1"/>
</dbReference>
<dbReference type="Pfam" id="PF02803">
    <property type="entry name" value="Thiolase_C"/>
    <property type="match status" value="1"/>
</dbReference>
<dbReference type="Pfam" id="PF00108">
    <property type="entry name" value="Thiolase_N"/>
    <property type="match status" value="1"/>
</dbReference>
<dbReference type="PIRSF" id="PIRSF000429">
    <property type="entry name" value="Ac-CoA_Ac_transf"/>
    <property type="match status" value="1"/>
</dbReference>
<dbReference type="SUPFAM" id="SSF53901">
    <property type="entry name" value="Thiolase-like"/>
    <property type="match status" value="2"/>
</dbReference>
<dbReference type="PROSITE" id="PS00098">
    <property type="entry name" value="THIOLASE_1"/>
    <property type="match status" value="1"/>
</dbReference>
<dbReference type="PROSITE" id="PS00737">
    <property type="entry name" value="THIOLASE_2"/>
    <property type="match status" value="1"/>
</dbReference>
<dbReference type="PROSITE" id="PS00099">
    <property type="entry name" value="THIOLASE_3"/>
    <property type="match status" value="1"/>
</dbReference>
<gene>
    <name evidence="1" type="primary">fadI</name>
    <name type="ordered locus">YPTS_2734</name>
</gene>
<keyword id="KW-0012">Acyltransferase</keyword>
<keyword id="KW-0963">Cytoplasm</keyword>
<keyword id="KW-0276">Fatty acid metabolism</keyword>
<keyword id="KW-0442">Lipid degradation</keyword>
<keyword id="KW-0443">Lipid metabolism</keyword>
<keyword id="KW-0808">Transferase</keyword>
<evidence type="ECO:0000255" key="1">
    <source>
        <dbReference type="HAMAP-Rule" id="MF_01618"/>
    </source>
</evidence>
<proteinExistence type="inferred from homology"/>
<organism>
    <name type="scientific">Yersinia pseudotuberculosis serotype IB (strain PB1/+)</name>
    <dbReference type="NCBI Taxonomy" id="502801"/>
    <lineage>
        <taxon>Bacteria</taxon>
        <taxon>Pseudomonadati</taxon>
        <taxon>Pseudomonadota</taxon>
        <taxon>Gammaproteobacteria</taxon>
        <taxon>Enterobacterales</taxon>
        <taxon>Yersiniaceae</taxon>
        <taxon>Yersinia</taxon>
    </lineage>
</organism>
<protein>
    <recommendedName>
        <fullName evidence="1">3-ketoacyl-CoA thiolase</fullName>
        <ecNumber evidence="1">2.3.1.16</ecNumber>
    </recommendedName>
    <alternativeName>
        <fullName evidence="1">ACSs</fullName>
    </alternativeName>
    <alternativeName>
        <fullName evidence="1">Acetyl-CoA acyltransferase</fullName>
    </alternativeName>
    <alternativeName>
        <fullName evidence="1">Acyl-CoA ligase</fullName>
    </alternativeName>
    <alternativeName>
        <fullName evidence="1">Beta-ketothiolase</fullName>
    </alternativeName>
    <alternativeName>
        <fullName evidence="1">Fatty acid oxidation complex subunit beta</fullName>
    </alternativeName>
</protein>
<sequence>MSKPLPLVTRQGDRIVIVNGLRTPFAKQATAYHGVPAVDLGKIVVSELLARSGISSELIDQLVFGQVVQMPEAPNIAREIVLGTGMSVHTDAYSVSRACATSFQAVANVAESIIAGSVDIAIAGGADSSSVLPIGVSKALARTLVDANKARSLSQKLKLFSRLRLRDLLPVAPAVAEYSTGLRMGDTAEQMAKTYGISREDQDALALRSHQLAAEAWQQGWLHDEVMTAYIPPYREAIIEDNNIRKDSTLAQYAKLRPAFDRQHGSVTAANSTPLTDGAAAVLMMSESKAKALGLPPLGYLRSFAFSAIDVWQDMLLGPSYATPLALDRAGITLADLTLIDMHEAFAAQTLANLKMFASDTFAREKLGRSQAIGEVDMSKFNVLGGSIAYGHPFAATGARMITQTLNELRRRGGGLGLTTACAAGGLGAAMILEVE</sequence>
<name>FADI_YERPB</name>
<accession>B2K8J6</accession>
<feature type="chain" id="PRO_1000185984" description="3-ketoacyl-CoA thiolase">
    <location>
        <begin position="1"/>
        <end position="436"/>
    </location>
</feature>
<feature type="active site" description="Acyl-thioester intermediate" evidence="1">
    <location>
        <position position="99"/>
    </location>
</feature>
<feature type="active site" description="Proton acceptor" evidence="1">
    <location>
        <position position="392"/>
    </location>
</feature>
<feature type="active site" description="Proton acceptor" evidence="1">
    <location>
        <position position="422"/>
    </location>
</feature>
<reference key="1">
    <citation type="submission" date="2008-04" db="EMBL/GenBank/DDBJ databases">
        <title>Complete sequence of Yersinia pseudotuberculosis PB1/+.</title>
        <authorList>
            <person name="Copeland A."/>
            <person name="Lucas S."/>
            <person name="Lapidus A."/>
            <person name="Glavina del Rio T."/>
            <person name="Dalin E."/>
            <person name="Tice H."/>
            <person name="Bruce D."/>
            <person name="Goodwin L."/>
            <person name="Pitluck S."/>
            <person name="Munk A.C."/>
            <person name="Brettin T."/>
            <person name="Detter J.C."/>
            <person name="Han C."/>
            <person name="Tapia R."/>
            <person name="Schmutz J."/>
            <person name="Larimer F."/>
            <person name="Land M."/>
            <person name="Hauser L."/>
            <person name="Challacombe J.F."/>
            <person name="Green L."/>
            <person name="Lindler L.E."/>
            <person name="Nikolich M.P."/>
            <person name="Richardson P."/>
        </authorList>
    </citation>
    <scope>NUCLEOTIDE SEQUENCE [LARGE SCALE GENOMIC DNA]</scope>
    <source>
        <strain>PB1/+</strain>
    </source>
</reference>